<gene>
    <name type="primary">higB</name>
    <name type="synonym">ygjN</name>
    <name type="ordered locus">b3083</name>
    <name type="ordered locus">JW3054</name>
</gene>
<dbReference type="EC" id="3.1.-.-"/>
<dbReference type="EMBL" id="U18997">
    <property type="protein sequence ID" value="AAA57884.1"/>
    <property type="molecule type" value="Genomic_DNA"/>
</dbReference>
<dbReference type="EMBL" id="U00096">
    <property type="protein sequence ID" value="AAC76118.1"/>
    <property type="molecule type" value="Genomic_DNA"/>
</dbReference>
<dbReference type="EMBL" id="AP009048">
    <property type="protein sequence ID" value="BAE77133.1"/>
    <property type="molecule type" value="Genomic_DNA"/>
</dbReference>
<dbReference type="PIR" id="H65096">
    <property type="entry name" value="H65096"/>
</dbReference>
<dbReference type="RefSeq" id="NP_417554.1">
    <property type="nucleotide sequence ID" value="NC_000913.3"/>
</dbReference>
<dbReference type="RefSeq" id="WP_000550189.1">
    <property type="nucleotide sequence ID" value="NZ_LN832404.1"/>
</dbReference>
<dbReference type="PDB" id="5IFG">
    <property type="method" value="X-ray"/>
    <property type="resolution" value="2.70 A"/>
    <property type="chains" value="A/C=1-104"/>
</dbReference>
<dbReference type="PDB" id="6KML">
    <property type="method" value="X-ray"/>
    <property type="resolution" value="2.10 A"/>
    <property type="chains" value="A/C=1-104"/>
</dbReference>
<dbReference type="PDB" id="6KMQ">
    <property type="method" value="X-ray"/>
    <property type="resolution" value="2.35 A"/>
    <property type="chains" value="A=1-104"/>
</dbReference>
<dbReference type="PDBsum" id="5IFG"/>
<dbReference type="PDBsum" id="6KML"/>
<dbReference type="PDBsum" id="6KMQ"/>
<dbReference type="SMR" id="P64578"/>
<dbReference type="BioGRID" id="4262402">
    <property type="interactions" value="9"/>
</dbReference>
<dbReference type="BioGRID" id="851907">
    <property type="interactions" value="1"/>
</dbReference>
<dbReference type="ComplexPortal" id="CPX-4121">
    <property type="entry name" value="HigAB toxin-antitoxin complex"/>
</dbReference>
<dbReference type="FunCoup" id="P64578">
    <property type="interactions" value="94"/>
</dbReference>
<dbReference type="IntAct" id="P64578">
    <property type="interactions" value="2"/>
</dbReference>
<dbReference type="STRING" id="511145.b3083"/>
<dbReference type="PaxDb" id="511145-b3083"/>
<dbReference type="EnsemblBacteria" id="AAC76118">
    <property type="protein sequence ID" value="AAC76118"/>
    <property type="gene ID" value="b3083"/>
</dbReference>
<dbReference type="GeneID" id="93778904"/>
<dbReference type="GeneID" id="947591"/>
<dbReference type="KEGG" id="ecj:JW3054"/>
<dbReference type="KEGG" id="eco:b3083"/>
<dbReference type="KEGG" id="ecoc:C3026_16835"/>
<dbReference type="PATRIC" id="fig|1411691.4.peg.3646"/>
<dbReference type="EchoBASE" id="EB2584"/>
<dbReference type="eggNOG" id="COG4680">
    <property type="taxonomic scope" value="Bacteria"/>
</dbReference>
<dbReference type="HOGENOM" id="CLU_153067_0_1_6"/>
<dbReference type="InParanoid" id="P64578"/>
<dbReference type="OMA" id="VFTHKEY"/>
<dbReference type="OrthoDB" id="9799912at2"/>
<dbReference type="PhylomeDB" id="P64578"/>
<dbReference type="BioCyc" id="EcoCyc:G7602-MONOMER"/>
<dbReference type="BioCyc" id="MetaCyc:G7602-MONOMER"/>
<dbReference type="PRO" id="PR:P64578"/>
<dbReference type="Proteomes" id="UP000000625">
    <property type="component" value="Chromosome"/>
</dbReference>
<dbReference type="GO" id="GO:0110001">
    <property type="term" value="C:toxin-antitoxin complex"/>
    <property type="evidence" value="ECO:0000314"/>
    <property type="project" value="EcoCyc"/>
</dbReference>
<dbReference type="GO" id="GO:0003723">
    <property type="term" value="F:RNA binding"/>
    <property type="evidence" value="ECO:0007669"/>
    <property type="project" value="UniProtKB-KW"/>
</dbReference>
<dbReference type="GO" id="GO:0004521">
    <property type="term" value="F:RNA endonuclease activity"/>
    <property type="evidence" value="ECO:0000314"/>
    <property type="project" value="EcoCyc"/>
</dbReference>
<dbReference type="GO" id="GO:0017148">
    <property type="term" value="P:negative regulation of translation"/>
    <property type="evidence" value="ECO:0000314"/>
    <property type="project" value="EcoCyc"/>
</dbReference>
<dbReference type="GO" id="GO:0006355">
    <property type="term" value="P:regulation of DNA-templated transcription"/>
    <property type="evidence" value="ECO:0000303"/>
    <property type="project" value="ComplexPortal"/>
</dbReference>
<dbReference type="GO" id="GO:0040008">
    <property type="term" value="P:regulation of growth"/>
    <property type="evidence" value="ECO:0000303"/>
    <property type="project" value="ComplexPortal"/>
</dbReference>
<dbReference type="GO" id="GO:0043488">
    <property type="term" value="P:regulation of mRNA stability"/>
    <property type="evidence" value="ECO:0000314"/>
    <property type="project" value="EcoCyc"/>
</dbReference>
<dbReference type="InterPro" id="IPR018669">
    <property type="entry name" value="Toxin_HigB"/>
</dbReference>
<dbReference type="Pfam" id="PF09907">
    <property type="entry name" value="HigB_toxin"/>
    <property type="match status" value="1"/>
</dbReference>
<protein>
    <recommendedName>
        <fullName>mRNA interferase toxin HigB</fullName>
        <ecNumber>3.1.-.-</ecNumber>
    </recommendedName>
    <alternativeName>
        <fullName>Endoribonuclease HigB</fullName>
    </alternativeName>
    <alternativeName>
        <fullName>Toxin HigB</fullName>
    </alternativeName>
</protein>
<comment type="function">
    <text evidence="1">Toxic component of a type II toxin-antitoxin (TA) system. A probable translation-dependent mRNA interferase. Overexpression causes cessation of cell growth and inhibits cell proliferation via inhibition of translation; this blockage is overcome by subsequent expression of antitoxin HigA. Overexpression causes cleavage of a number of mRNAs in a translation-dependent fashion, suggesting this is an mRNA interferase.</text>
</comment>
<comment type="subunit">
    <text evidence="3">Probably forms a complex with the antitoxin HigA which inhibits the mRNA interferase activity.</text>
</comment>
<comment type="interaction">
    <interactant intactId="EBI-1135071">
        <id>P64578</id>
    </interactant>
    <interactant intactId="EBI-1131548">
        <id>P67701</id>
        <label>higA</label>
    </interactant>
    <organismsDiffer>false</organismsDiffer>
    <experiments>4</experiments>
</comment>
<comment type="induction">
    <text evidence="1">Induced by amino acid starvation and when translation is blocked. Induction is decreased in the absence of the Lon protease suggesting, by homology to other toxin-antitoxin systems, that Lon may degrade the HigA antitoxin. Transcription is negatively regulated by the cognate locus, probably by HigA. A member of the higB-higA operon.</text>
</comment>
<comment type="similarity">
    <text evidence="2">Belongs to the HigB mRNA interferase family.</text>
</comment>
<name>HIGB_ECOLI</name>
<keyword id="KW-0002">3D-structure</keyword>
<keyword id="KW-0255">Endonuclease</keyword>
<keyword id="KW-0378">Hydrolase</keyword>
<keyword id="KW-0540">Nuclease</keyword>
<keyword id="KW-1185">Reference proteome</keyword>
<keyword id="KW-0694">RNA-binding</keyword>
<keyword id="KW-0346">Stress response</keyword>
<keyword id="KW-1277">Toxin-antitoxin system</keyword>
<accession>P64578</accession>
<accession>P42595</accession>
<accession>Q2M9C3</accession>
<sequence>MHLITQKALKDAAEKYPQHKTELVALGNTIAKGYFKKPESLKAVFPSLDNFKYLDKHYVFNVGGNELRVVAMVFFESQKCYIREVMTHKEYDFFTAVHRTKGKK</sequence>
<organism>
    <name type="scientific">Escherichia coli (strain K12)</name>
    <dbReference type="NCBI Taxonomy" id="83333"/>
    <lineage>
        <taxon>Bacteria</taxon>
        <taxon>Pseudomonadati</taxon>
        <taxon>Pseudomonadota</taxon>
        <taxon>Gammaproteobacteria</taxon>
        <taxon>Enterobacterales</taxon>
        <taxon>Enterobacteriaceae</taxon>
        <taxon>Escherichia</taxon>
    </lineage>
</organism>
<reference key="1">
    <citation type="journal article" date="1997" name="Science">
        <title>The complete genome sequence of Escherichia coli K-12.</title>
        <authorList>
            <person name="Blattner F.R."/>
            <person name="Plunkett G. III"/>
            <person name="Bloch C.A."/>
            <person name="Perna N.T."/>
            <person name="Burland V."/>
            <person name="Riley M."/>
            <person name="Collado-Vides J."/>
            <person name="Glasner J.D."/>
            <person name="Rode C.K."/>
            <person name="Mayhew G.F."/>
            <person name="Gregor J."/>
            <person name="Davis N.W."/>
            <person name="Kirkpatrick H.A."/>
            <person name="Goeden M.A."/>
            <person name="Rose D.J."/>
            <person name="Mau B."/>
            <person name="Shao Y."/>
        </authorList>
    </citation>
    <scope>NUCLEOTIDE SEQUENCE [LARGE SCALE GENOMIC DNA]</scope>
    <source>
        <strain>K12 / MG1655 / ATCC 47076</strain>
    </source>
</reference>
<reference key="2">
    <citation type="journal article" date="2006" name="Mol. Syst. Biol.">
        <title>Highly accurate genome sequences of Escherichia coli K-12 strains MG1655 and W3110.</title>
        <authorList>
            <person name="Hayashi K."/>
            <person name="Morooka N."/>
            <person name="Yamamoto Y."/>
            <person name="Fujita K."/>
            <person name="Isono K."/>
            <person name="Choi S."/>
            <person name="Ohtsubo E."/>
            <person name="Baba T."/>
            <person name="Wanner B.L."/>
            <person name="Mori H."/>
            <person name="Horiuchi T."/>
        </authorList>
    </citation>
    <scope>NUCLEOTIDE SEQUENCE [LARGE SCALE GENOMIC DNA]</scope>
    <source>
        <strain>K12 / W3110 / ATCC 27325 / DSM 5911</strain>
    </source>
</reference>
<reference key="3">
    <citation type="journal article" date="2010" name="Mol. Microbiol.">
        <title>Three new RelE-homologous mRNA interferases of Escherichia coli differentially induced by environmental stresses.</title>
        <authorList>
            <person name="Christensen-Dalsgaard M."/>
            <person name="Jorgensen M.G."/>
            <person name="Gerdes K."/>
        </authorList>
    </citation>
    <scope>FUNCTION AS AN MRNA INTERFERASE</scope>
    <scope>INDUCTION</scope>
    <scope>OPERON STRUCTURE</scope>
    <source>
        <strain>K12 / MG1655 / ATCC 47076</strain>
    </source>
</reference>
<reference key="4">
    <citation type="journal article" date="2011" name="Proc. Natl. Acad. Sci. U.S.A.">
        <title>Bacterial persistence by RNA endonucleases.</title>
        <authorList>
            <person name="Maisonneuve E."/>
            <person name="Shakespeare L.J."/>
            <person name="Joergensen M.G."/>
            <person name="Gerdes K."/>
        </authorList>
    </citation>
    <scope>RETRACTED PAPER</scope>
    <source>
        <strain>K12 / MG1655 / ATCC 47076</strain>
    </source>
</reference>
<reference key="5">
    <citation type="journal article" date="2018" name="Proc. Natl. Acad. Sci. U.S.A.">
        <authorList>
            <person name="Maisonneuve E."/>
            <person name="Shakespeare L.J."/>
            <person name="Joergensen M.G."/>
            <person name="Gerdes K."/>
        </authorList>
    </citation>
    <scope>RETRACTION NOTICE OF PUBMED:21788497</scope>
</reference>
<evidence type="ECO:0000269" key="1">
    <source>
    </source>
</evidence>
<evidence type="ECO:0000305" key="2"/>
<evidence type="ECO:0000305" key="3">
    <source>
    </source>
</evidence>
<evidence type="ECO:0007829" key="4">
    <source>
        <dbReference type="PDB" id="5IFG"/>
    </source>
</evidence>
<evidence type="ECO:0007829" key="5">
    <source>
        <dbReference type="PDB" id="6KML"/>
    </source>
</evidence>
<feature type="chain" id="PRO_0000169421" description="mRNA interferase toxin HigB">
    <location>
        <begin position="1"/>
        <end position="104"/>
    </location>
</feature>
<feature type="strand" evidence="5">
    <location>
        <begin position="2"/>
        <end position="4"/>
    </location>
</feature>
<feature type="helix" evidence="5">
    <location>
        <begin position="7"/>
        <end position="15"/>
    </location>
</feature>
<feature type="helix" evidence="5">
    <location>
        <begin position="17"/>
        <end position="19"/>
    </location>
</feature>
<feature type="helix" evidence="5">
    <location>
        <begin position="20"/>
        <end position="32"/>
    </location>
</feature>
<feature type="helix" evidence="5">
    <location>
        <begin position="38"/>
        <end position="44"/>
    </location>
</feature>
<feature type="strand" evidence="4">
    <location>
        <begin position="52"/>
        <end position="54"/>
    </location>
</feature>
<feature type="strand" evidence="5">
    <location>
        <begin position="57"/>
        <end position="62"/>
    </location>
</feature>
<feature type="turn" evidence="5">
    <location>
        <begin position="63"/>
        <end position="66"/>
    </location>
</feature>
<feature type="strand" evidence="5">
    <location>
        <begin position="67"/>
        <end position="74"/>
    </location>
</feature>
<feature type="turn" evidence="5">
    <location>
        <begin position="75"/>
        <end position="78"/>
    </location>
</feature>
<feature type="strand" evidence="5">
    <location>
        <begin position="79"/>
        <end position="87"/>
    </location>
</feature>
<feature type="helix" evidence="5">
    <location>
        <begin position="88"/>
        <end position="96"/>
    </location>
</feature>
<proteinExistence type="evidence at protein level"/>